<name>RL2_RUEST</name>
<gene>
    <name evidence="1" type="primary">rplB</name>
    <name type="ordered locus">TM1040_0252</name>
</gene>
<reference key="1">
    <citation type="submission" date="2006-05" db="EMBL/GenBank/DDBJ databases">
        <title>Complete sequence of chromosome of Silicibacter sp. TM1040.</title>
        <authorList>
            <consortium name="US DOE Joint Genome Institute"/>
            <person name="Copeland A."/>
            <person name="Lucas S."/>
            <person name="Lapidus A."/>
            <person name="Barry K."/>
            <person name="Detter J.C."/>
            <person name="Glavina del Rio T."/>
            <person name="Hammon N."/>
            <person name="Israni S."/>
            <person name="Dalin E."/>
            <person name="Tice H."/>
            <person name="Pitluck S."/>
            <person name="Brettin T."/>
            <person name="Bruce D."/>
            <person name="Han C."/>
            <person name="Tapia R."/>
            <person name="Goodwin L."/>
            <person name="Thompson L.S."/>
            <person name="Gilna P."/>
            <person name="Schmutz J."/>
            <person name="Larimer F."/>
            <person name="Land M."/>
            <person name="Hauser L."/>
            <person name="Kyrpides N."/>
            <person name="Kim E."/>
            <person name="Belas R."/>
            <person name="Moran M.A."/>
            <person name="Buchan A."/>
            <person name="Gonzalez J.M."/>
            <person name="Schell M.A."/>
            <person name="Sun F."/>
            <person name="Richardson P."/>
        </authorList>
    </citation>
    <scope>NUCLEOTIDE SEQUENCE [LARGE SCALE GENOMIC DNA]</scope>
    <source>
        <strain>TM1040</strain>
    </source>
</reference>
<feature type="chain" id="PRO_0000310017" description="Large ribosomal subunit protein uL2">
    <location>
        <begin position="1"/>
        <end position="280"/>
    </location>
</feature>
<feature type="region of interest" description="Disordered" evidence="2">
    <location>
        <begin position="33"/>
        <end position="55"/>
    </location>
</feature>
<feature type="region of interest" description="Disordered" evidence="2">
    <location>
        <begin position="199"/>
        <end position="266"/>
    </location>
</feature>
<feature type="compositionally biased region" description="Basic residues" evidence="2">
    <location>
        <begin position="209"/>
        <end position="219"/>
    </location>
</feature>
<keyword id="KW-1185">Reference proteome</keyword>
<keyword id="KW-0687">Ribonucleoprotein</keyword>
<keyword id="KW-0689">Ribosomal protein</keyword>
<keyword id="KW-0694">RNA-binding</keyword>
<keyword id="KW-0699">rRNA-binding</keyword>
<evidence type="ECO:0000255" key="1">
    <source>
        <dbReference type="HAMAP-Rule" id="MF_01320"/>
    </source>
</evidence>
<evidence type="ECO:0000256" key="2">
    <source>
        <dbReference type="SAM" id="MobiDB-lite"/>
    </source>
</evidence>
<evidence type="ECO:0000305" key="3"/>
<organism>
    <name type="scientific">Ruegeria sp. (strain TM1040)</name>
    <name type="common">Silicibacter sp.</name>
    <dbReference type="NCBI Taxonomy" id="292414"/>
    <lineage>
        <taxon>Bacteria</taxon>
        <taxon>Pseudomonadati</taxon>
        <taxon>Pseudomonadota</taxon>
        <taxon>Alphaproteobacteria</taxon>
        <taxon>Rhodobacterales</taxon>
        <taxon>Roseobacteraceae</taxon>
        <taxon>Ruegeria</taxon>
    </lineage>
</organism>
<accession>Q1GK31</accession>
<comment type="function">
    <text evidence="1">One of the primary rRNA binding proteins. Required for association of the 30S and 50S subunits to form the 70S ribosome, for tRNA binding and peptide bond formation. It has been suggested to have peptidyltransferase activity; this is somewhat controversial. Makes several contacts with the 16S rRNA in the 70S ribosome.</text>
</comment>
<comment type="subunit">
    <text evidence="1">Part of the 50S ribosomal subunit. Forms a bridge to the 30S subunit in the 70S ribosome.</text>
</comment>
<comment type="similarity">
    <text evidence="1">Belongs to the universal ribosomal protein uL2 family.</text>
</comment>
<dbReference type="EMBL" id="CP000377">
    <property type="protein sequence ID" value="ABF62985.1"/>
    <property type="molecule type" value="Genomic_DNA"/>
</dbReference>
<dbReference type="RefSeq" id="WP_008207548.1">
    <property type="nucleotide sequence ID" value="NC_008044.1"/>
</dbReference>
<dbReference type="SMR" id="Q1GK31"/>
<dbReference type="STRING" id="292414.TM1040_0252"/>
<dbReference type="KEGG" id="sit:TM1040_0252"/>
<dbReference type="eggNOG" id="COG0090">
    <property type="taxonomic scope" value="Bacteria"/>
</dbReference>
<dbReference type="HOGENOM" id="CLU_036235_2_1_5"/>
<dbReference type="OrthoDB" id="9778722at2"/>
<dbReference type="Proteomes" id="UP000000636">
    <property type="component" value="Chromosome"/>
</dbReference>
<dbReference type="GO" id="GO:0015934">
    <property type="term" value="C:large ribosomal subunit"/>
    <property type="evidence" value="ECO:0007669"/>
    <property type="project" value="InterPro"/>
</dbReference>
<dbReference type="GO" id="GO:0019843">
    <property type="term" value="F:rRNA binding"/>
    <property type="evidence" value="ECO:0007669"/>
    <property type="project" value="UniProtKB-UniRule"/>
</dbReference>
<dbReference type="GO" id="GO:0003735">
    <property type="term" value="F:structural constituent of ribosome"/>
    <property type="evidence" value="ECO:0007669"/>
    <property type="project" value="InterPro"/>
</dbReference>
<dbReference type="GO" id="GO:0016740">
    <property type="term" value="F:transferase activity"/>
    <property type="evidence" value="ECO:0007669"/>
    <property type="project" value="InterPro"/>
</dbReference>
<dbReference type="GO" id="GO:0002181">
    <property type="term" value="P:cytoplasmic translation"/>
    <property type="evidence" value="ECO:0007669"/>
    <property type="project" value="TreeGrafter"/>
</dbReference>
<dbReference type="FunFam" id="2.30.30.30:FF:000001">
    <property type="entry name" value="50S ribosomal protein L2"/>
    <property type="match status" value="1"/>
</dbReference>
<dbReference type="FunFam" id="2.40.50.140:FF:000003">
    <property type="entry name" value="50S ribosomal protein L2"/>
    <property type="match status" value="1"/>
</dbReference>
<dbReference type="FunFam" id="4.10.950.10:FF:000001">
    <property type="entry name" value="50S ribosomal protein L2"/>
    <property type="match status" value="1"/>
</dbReference>
<dbReference type="Gene3D" id="2.30.30.30">
    <property type="match status" value="1"/>
</dbReference>
<dbReference type="Gene3D" id="2.40.50.140">
    <property type="entry name" value="Nucleic acid-binding proteins"/>
    <property type="match status" value="1"/>
</dbReference>
<dbReference type="Gene3D" id="4.10.950.10">
    <property type="entry name" value="Ribosomal protein L2, domain 3"/>
    <property type="match status" value="1"/>
</dbReference>
<dbReference type="HAMAP" id="MF_01320_B">
    <property type="entry name" value="Ribosomal_uL2_B"/>
    <property type="match status" value="1"/>
</dbReference>
<dbReference type="InterPro" id="IPR012340">
    <property type="entry name" value="NA-bd_OB-fold"/>
</dbReference>
<dbReference type="InterPro" id="IPR014722">
    <property type="entry name" value="Rib_uL2_dom2"/>
</dbReference>
<dbReference type="InterPro" id="IPR002171">
    <property type="entry name" value="Ribosomal_uL2"/>
</dbReference>
<dbReference type="InterPro" id="IPR005880">
    <property type="entry name" value="Ribosomal_uL2_bac/org-type"/>
</dbReference>
<dbReference type="InterPro" id="IPR022669">
    <property type="entry name" value="Ribosomal_uL2_C"/>
</dbReference>
<dbReference type="InterPro" id="IPR022671">
    <property type="entry name" value="Ribosomal_uL2_CS"/>
</dbReference>
<dbReference type="InterPro" id="IPR014726">
    <property type="entry name" value="Ribosomal_uL2_dom3"/>
</dbReference>
<dbReference type="InterPro" id="IPR022666">
    <property type="entry name" value="Ribosomal_uL2_RNA-bd_dom"/>
</dbReference>
<dbReference type="InterPro" id="IPR008991">
    <property type="entry name" value="Translation_prot_SH3-like_sf"/>
</dbReference>
<dbReference type="NCBIfam" id="TIGR01171">
    <property type="entry name" value="rplB_bact"/>
    <property type="match status" value="1"/>
</dbReference>
<dbReference type="PANTHER" id="PTHR13691:SF5">
    <property type="entry name" value="LARGE RIBOSOMAL SUBUNIT PROTEIN UL2M"/>
    <property type="match status" value="1"/>
</dbReference>
<dbReference type="PANTHER" id="PTHR13691">
    <property type="entry name" value="RIBOSOMAL PROTEIN L2"/>
    <property type="match status" value="1"/>
</dbReference>
<dbReference type="Pfam" id="PF00181">
    <property type="entry name" value="Ribosomal_L2"/>
    <property type="match status" value="1"/>
</dbReference>
<dbReference type="Pfam" id="PF03947">
    <property type="entry name" value="Ribosomal_L2_C"/>
    <property type="match status" value="1"/>
</dbReference>
<dbReference type="PIRSF" id="PIRSF002158">
    <property type="entry name" value="Ribosomal_L2"/>
    <property type="match status" value="1"/>
</dbReference>
<dbReference type="SMART" id="SM01383">
    <property type="entry name" value="Ribosomal_L2"/>
    <property type="match status" value="1"/>
</dbReference>
<dbReference type="SMART" id="SM01382">
    <property type="entry name" value="Ribosomal_L2_C"/>
    <property type="match status" value="1"/>
</dbReference>
<dbReference type="SUPFAM" id="SSF50249">
    <property type="entry name" value="Nucleic acid-binding proteins"/>
    <property type="match status" value="1"/>
</dbReference>
<dbReference type="SUPFAM" id="SSF50104">
    <property type="entry name" value="Translation proteins SH3-like domain"/>
    <property type="match status" value="1"/>
</dbReference>
<dbReference type="PROSITE" id="PS00467">
    <property type="entry name" value="RIBOSOMAL_L2"/>
    <property type="match status" value="1"/>
</dbReference>
<proteinExistence type="inferred from homology"/>
<sequence>MALKSYKPTTPGQRGLVLIDRSELWKGRPVKSLTEGLTKSGGRNNTGRITSRRRGGGAKRLYRIVDFKRNKFDVAATVERIEYDPNRTAFIALVKYEDGEQAYILAPQRLAVGDKVIASAKADIKPGNAMPFSGMPIGTIVHNIEMKPGKGGQIARAAGTYAQFVGRDGGYAQIRLSSGELRLVRQECMATVGAVSNPDNSNQNYGKAGRMRHKGKRPSVRGVVMNPIDHPHGGGEGRTSGGRHPVTPWGKPTKGKRTRNTNKASQKLIIRSRHAKKKGR</sequence>
<protein>
    <recommendedName>
        <fullName evidence="1">Large ribosomal subunit protein uL2</fullName>
    </recommendedName>
    <alternativeName>
        <fullName evidence="3">50S ribosomal protein L2</fullName>
    </alternativeName>
</protein>